<accession>P12108</accession>
<accession>Q90585</accession>
<gene>
    <name type="primary">COL9A2</name>
</gene>
<keyword id="KW-0176">Collagen</keyword>
<keyword id="KW-0903">Direct protein sequencing</keyword>
<keyword id="KW-1015">Disulfide bond</keyword>
<keyword id="KW-0272">Extracellular matrix</keyword>
<keyword id="KW-0325">Glycoprotein</keyword>
<keyword id="KW-0379">Hydroxylation</keyword>
<keyword id="KW-0654">Proteoglycan</keyword>
<keyword id="KW-1185">Reference proteome</keyword>
<keyword id="KW-0677">Repeat</keyword>
<keyword id="KW-0964">Secreted</keyword>
<keyword id="KW-0732">Signal</keyword>
<name>CO9A2_CHICK</name>
<protein>
    <recommendedName>
        <fullName>Collagen alpha-2(IX) chain</fullName>
    </recommendedName>
</protein>
<sequence length="677" mass="63796">MAHRSPALCLLLLHAACLCLAQLRGPPGEPGPRGPPGPPGVPGADGIDGDKGSPGAPGSPGAKGEPGAPGPDGPPGKPGLDGLTGAKGSRGPWGGQGLKGQPGLPGPPGLPGPSLPGPPGLPGQVGLPGEIGVPGPKGDPGPDGPRGPPGPPGKPGPPGHIQGVEGSADFLCPTNCPPGPKGPQGLQGLKGHRGRPGALGEPGQQGKQGPKGDVGVSGEQGVPGPPGPQGQRGYPGMAGPKGETGPAGYKGMVGTIGAAGRPGREGPKGPPGDPGEKGELGGRGIRGPQGDIGPKGDMGLPGIDGKDGTPGIPGVKGTAGQPGRPGPPGHRGQAGLPGQPGSKGGPGDKGEVGARGQQGITGTPGLDGEPGPPGDAGTAGVPGLKGDRGERGPVGAPGEAGQSGPKGEQGPPGIPGPQGLPGVKGDKGSPGKTGPKGSTGDPGVHGLAGVKGEKGESGEPGPKGQQGIQGELGFPGPSGDAGSPGVRGYPGPPGPRGLLGERGVPGMPGQRGVAGRDAGDQHIIDVVLKMMQEQLAEVAVSAKRAALGGVGAMGPPGPPGPPGPPGEQGLHGPMGPRGVPGLLGAAGQIGNIGPKGKRGEKGERGDTGRGHPGMPGPPGIPGLPGIPGHALAGKDGERGPPGVPGDAGRPGSPGPAGLPGFCEPAACLGALPTPRHG</sequence>
<evidence type="ECO:0000250" key="1"/>
<evidence type="ECO:0000250" key="2">
    <source>
        <dbReference type="UniProtKB" id="C0HLN2"/>
    </source>
</evidence>
<evidence type="ECO:0000255" key="3"/>
<evidence type="ECO:0000256" key="4">
    <source>
        <dbReference type="SAM" id="MobiDB-lite"/>
    </source>
</evidence>
<evidence type="ECO:0000269" key="5">
    <source>
    </source>
</evidence>
<evidence type="ECO:0000269" key="6">
    <source>
    </source>
</evidence>
<evidence type="ECO:0000269" key="7">
    <source>
    </source>
</evidence>
<evidence type="ECO:0000305" key="8"/>
<feature type="signal peptide" evidence="3">
    <location>
        <begin position="1"/>
        <end position="21"/>
    </location>
</feature>
<feature type="chain" id="PRO_0000005839" description="Collagen alpha-2(IX) chain">
    <location>
        <begin position="22"/>
        <end position="677"/>
    </location>
</feature>
<feature type="region of interest" description="Triple-helical region 4 (COL4)">
    <location>
        <begin position="25"/>
        <end position="161"/>
    </location>
</feature>
<feature type="region of interest" description="Disordered" evidence="4">
    <location>
        <begin position="28"/>
        <end position="516"/>
    </location>
</feature>
<feature type="region of interest" description="Nonhelical region 4 (NC4)">
    <location>
        <begin position="162"/>
        <end position="178"/>
    </location>
</feature>
<feature type="region of interest" description="Triple-helical region 3 (COL3)">
    <location>
        <begin position="179"/>
        <end position="517"/>
    </location>
</feature>
<feature type="region of interest" description="Nonhelical region 3 (NC3)">
    <location>
        <begin position="518"/>
        <end position="547"/>
    </location>
</feature>
<feature type="region of interest" description="Triple-helical region 2 (COL2)">
    <location>
        <begin position="548"/>
        <end position="630"/>
    </location>
</feature>
<feature type="region of interest" description="Disordered" evidence="4">
    <location>
        <begin position="550"/>
        <end position="657"/>
    </location>
</feature>
<feature type="region of interest" description="Nonhelical region 2 (NC2)">
    <location>
        <begin position="631"/>
        <end position="632"/>
    </location>
</feature>
<feature type="region of interest" description="Triple-helical region 1 (COL1)">
    <location>
        <begin position="633"/>
        <end position="662"/>
    </location>
</feature>
<feature type="region of interest" description="Nonhelical region 1 (NC1)">
    <location>
        <begin position="663"/>
        <end position="677"/>
    </location>
</feature>
<feature type="compositionally biased region" description="Pro residues" evidence="4">
    <location>
        <begin position="28"/>
        <end position="41"/>
    </location>
</feature>
<feature type="compositionally biased region" description="Low complexity" evidence="4">
    <location>
        <begin position="53"/>
        <end position="66"/>
    </location>
</feature>
<feature type="compositionally biased region" description="Pro residues" evidence="4">
    <location>
        <begin position="68"/>
        <end position="77"/>
    </location>
</feature>
<feature type="compositionally biased region" description="Gly residues" evidence="4">
    <location>
        <begin position="91"/>
        <end position="100"/>
    </location>
</feature>
<feature type="compositionally biased region" description="Pro residues" evidence="4">
    <location>
        <begin position="104"/>
        <end position="121"/>
    </location>
</feature>
<feature type="compositionally biased region" description="Pro residues" evidence="4">
    <location>
        <begin position="137"/>
        <end position="158"/>
    </location>
</feature>
<feature type="compositionally biased region" description="Low complexity" evidence="4">
    <location>
        <begin position="363"/>
        <end position="382"/>
    </location>
</feature>
<feature type="compositionally biased region" description="Low complexity" evidence="4">
    <location>
        <begin position="430"/>
        <end position="442"/>
    </location>
</feature>
<feature type="compositionally biased region" description="Low complexity" evidence="4">
    <location>
        <begin position="496"/>
        <end position="505"/>
    </location>
</feature>
<feature type="compositionally biased region" description="Pro residues" evidence="4">
    <location>
        <begin position="555"/>
        <end position="565"/>
    </location>
</feature>
<feature type="compositionally biased region" description="Basic and acidic residues" evidence="4">
    <location>
        <begin position="597"/>
        <end position="609"/>
    </location>
</feature>
<feature type="modified residue" description="4-hydroxyproline" evidence="6">
    <location>
        <position position="158"/>
    </location>
</feature>
<feature type="modified residue" description="4-hydroxyproline" evidence="6">
    <location>
        <position position="178"/>
    </location>
</feature>
<feature type="modified residue" description="5-hydroxylysine" evidence="5 7">
    <location>
        <position position="181"/>
    </location>
</feature>
<feature type="modified residue" description="Allysine" evidence="1">
    <location>
        <position position="190"/>
    </location>
</feature>
<feature type="glycosylation site" description="O-linked (Xyl...) (glycosaminoglycan) serine" evidence="6">
    <location>
        <position position="167"/>
    </location>
</feature>
<feature type="glycosylation site" description="O-linked (Gal...) hydroxylysine" evidence="5 7">
    <location>
        <position position="181"/>
    </location>
</feature>
<feature type="disulfide bond" description="Interchain" evidence="3">
    <location>
        <position position="172"/>
    </location>
</feature>
<feature type="disulfide bond" description="Interchain" evidence="3">
    <location>
        <position position="176"/>
    </location>
</feature>
<feature type="sequence conflict" description="In Ref. 5; AAA48643." evidence="8" ref="5">
    <original>QS</original>
    <variation>RA</variation>
    <location>
        <begin position="402"/>
        <end position="403"/>
    </location>
</feature>
<feature type="sequence conflict" description="In Ref. 8; no nucleotide entry." evidence="8" ref="8">
    <original>E</original>
    <variation>Q</variation>
    <location>
        <position position="600"/>
    </location>
</feature>
<feature type="sequence conflict" description="In Ref. 5; AAA48643." evidence="8" ref="5">
    <original>A</original>
    <variation>D</variation>
    <location>
        <position position="632"/>
    </location>
</feature>
<organism>
    <name type="scientific">Gallus gallus</name>
    <name type="common">Chicken</name>
    <dbReference type="NCBI Taxonomy" id="9031"/>
    <lineage>
        <taxon>Eukaryota</taxon>
        <taxon>Metazoa</taxon>
        <taxon>Chordata</taxon>
        <taxon>Craniata</taxon>
        <taxon>Vertebrata</taxon>
        <taxon>Euteleostomi</taxon>
        <taxon>Archelosauria</taxon>
        <taxon>Archosauria</taxon>
        <taxon>Dinosauria</taxon>
        <taxon>Saurischia</taxon>
        <taxon>Theropoda</taxon>
        <taxon>Coelurosauria</taxon>
        <taxon>Aves</taxon>
        <taxon>Neognathae</taxon>
        <taxon>Galloanserae</taxon>
        <taxon>Galliformes</taxon>
        <taxon>Phasianidae</taxon>
        <taxon>Phasianinae</taxon>
        <taxon>Gallus</taxon>
    </lineage>
</organism>
<reference key="1">
    <citation type="book" date="1990" name="Extracellular Matrix Genes">
        <title>The molecular biology of collagens with short triple-helical domains.</title>
        <editorList>
            <person name="Sandell L.J."/>
            <person name="Boyd C.D."/>
        </editorList>
        <authorList>
            <person name="Ninomiya Y."/>
            <person name="Castagnola P."/>
            <person name="Gerecke D."/>
            <person name="Gordon M.K."/>
            <person name="Jacenko O."/>
            <person name="LuValle P."/>
            <person name="McCarthy M."/>
            <person name="Muragaki Y."/>
            <person name="Nishimura I."/>
            <person name="Oh S."/>
            <person name="Rosenblum N."/>
            <person name="Sato N."/>
            <person name="Sugrue S."/>
            <person name="Taylor R."/>
            <person name="Vasios G."/>
            <person name="Yamaguchi N."/>
            <person name="Olsen B.R."/>
        </authorList>
    </citation>
    <scope>NUCLEOTIDE SEQUENCE [MRNA]</scope>
</reference>
<reference key="2">
    <citation type="journal article" date="1989" name="J. Biol. Chem.">
        <title>Tissue-specific forms of type IX collagen-proteoglycan arise from the use of two widely separated promoters.</title>
        <authorList>
            <person name="Nishimura I."/>
            <person name="Muragaki Y."/>
            <person name="Olsen B.R."/>
        </authorList>
    </citation>
    <scope>NUCLEOTIDE SEQUENCE [MRNA] OF 1-174</scope>
</reference>
<reference key="3">
    <citation type="journal article" date="1987" name="Proc. Natl. Acad. Sci. U.S.A.">
        <title>Structure of the glycosaminoglycan domain in the type IX collagen-proteoglycan.</title>
        <authorList>
            <person name="McCormick D."/>
            <person name="van der Rest M."/>
            <person name="Goodship J."/>
            <person name="Lozano G."/>
            <person name="Ninomiya Y."/>
            <person name="Olsen B.R."/>
        </authorList>
    </citation>
    <scope>NUCLEOTIDE SEQUENCE [MRNA] OF 120-195</scope>
    <scope>PROTEIN SEQUENCE OF 147-165 AND 170-188</scope>
    <scope>HYDROXYLATION AT LYS-181</scope>
    <scope>GLYCOSYLATION AT LYS-181</scope>
</reference>
<reference key="4">
    <citation type="journal article" date="1988" name="J. Biol. Chem.">
        <title>Isolation and sequence analysis of the glycosaminoglycan attachment site of type IX collagen.</title>
        <authorList>
            <person name="Huber S."/>
            <person name="Winterhalter K.H."/>
            <person name="Vaughan L."/>
        </authorList>
    </citation>
    <scope>PROTEIN SEQUENCE OF 156-178</scope>
    <scope>HYDROXYLATION AT PRO-158 AND PRO-178</scope>
    <scope>GLYCOSYLATION AT SER-167</scope>
</reference>
<reference key="5">
    <citation type="journal article" date="1985" name="Biochemistry">
        <title>Construction and characterization of cDNA encoding the alpha 2 chain of chicken type IX collagen.</title>
        <authorList>
            <person name="Ninomiya Y."/>
            <person name="van der Rest M."/>
            <person name="Mayne R."/>
            <person name="Lozano G."/>
            <person name="Olsen B.R."/>
        </authorList>
    </citation>
    <scope>NUCLEOTIDE SEQUENCE [MRNA] OF 401-677</scope>
    <scope>PROTEIN SEQUENCE OF 433-450 AND 542-562</scope>
</reference>
<reference key="6">
    <citation type="journal article" date="1988" name="J. Biol. Chem.">
        <title>Type IX collagen proteoglycan from cartilage is covalently cross-linked to type II collagen.</title>
        <authorList>
            <person name="van der Rest M."/>
            <person name="Mayne R."/>
        </authorList>
    </citation>
    <scope>PROTEIN SEQUENCE OF 170-184</scope>
    <scope>HYDROXYLATION AT LYS-181</scope>
    <scope>GLYCOSYLATION AT LYS-181</scope>
</reference>
<reference key="7">
    <citation type="journal article" date="1985" name="Ann. N. Y. Acad. Sci.">
        <title>The structure of type IX collagen.</title>
        <authorList>
            <person name="Mayne R."/>
            <person name="van der Rest M."/>
            <person name="Ninomiya Y."/>
            <person name="Olsen B.R."/>
        </authorList>
    </citation>
    <scope>PROTEIN SEQUENCE OF 218-243</scope>
</reference>
<reference key="8">
    <citation type="journal article" date="1985" name="Proc. Natl. Acad. Sci. U.S.A.">
        <title>A distinct class of vertebrate collagen genes encodes chicken type IX collagen polypeptides.</title>
        <authorList>
            <person name="Lozano G."/>
            <person name="Ninomiya Y."/>
            <person name="Thompson H."/>
            <person name="Olsen B.R."/>
        </authorList>
    </citation>
    <scope>NUCLEOTIDE SEQUENCE [GENOMIC DNA] OF 404-677</scope>
</reference>
<proteinExistence type="evidence at protein level"/>
<comment type="function">
    <text>Structural component of hyaline cartilage and vitreous of the eye.</text>
</comment>
<comment type="subunit">
    <text evidence="2">Heterotrimer of an alpha 1(IX), an alpha 2(IX) and an alpha 3(IX) chain (By similarity). The chains are linked to each other by interchain disulfide bonds (By similarity). Trimers are also cross-linked via hydroxylysines (By similarity).</text>
</comment>
<comment type="subcellular location">
    <subcellularLocation>
        <location evidence="1">Secreted</location>
        <location evidence="1">Extracellular space</location>
        <location evidence="1">Extracellular matrix</location>
    </subcellularLocation>
</comment>
<comment type="PTM">
    <text>Covalently linked to the telopeptides of type II collagen by lysine-derived cross-links.</text>
</comment>
<comment type="PTM">
    <text evidence="5 6 7">Prolines at the third position of the tripeptide repeating unit (G-X-Y) are hydroxylated in some or all of the chains.</text>
</comment>
<comment type="similarity">
    <text evidence="8">Belongs to the fibril-associated collagens with interrupted helices (FACIT) family.</text>
</comment>
<dbReference type="EMBL" id="M28660">
    <property type="protein sequence ID" value="AAA48709.1"/>
    <property type="molecule type" value="mRNA"/>
</dbReference>
<dbReference type="EMBL" id="M16715">
    <property type="protein sequence ID" value="AAA48644.1"/>
    <property type="molecule type" value="mRNA"/>
</dbReference>
<dbReference type="EMBL" id="AH002439">
    <property type="protein sequence ID" value="AAA48643.1"/>
    <property type="molecule type" value="Genomic_DNA"/>
</dbReference>
<dbReference type="PIR" id="S23296">
    <property type="entry name" value="S23296"/>
</dbReference>
<dbReference type="ComplexPortal" id="CPX-4104">
    <property type="entry name" value="Collagen type IX trimer"/>
</dbReference>
<dbReference type="FunCoup" id="P12108">
    <property type="interactions" value="2"/>
</dbReference>
<dbReference type="GlyCosmos" id="P12108">
    <property type="glycosylation" value="2 sites, No reported glycans"/>
</dbReference>
<dbReference type="GlyGen" id="P12108">
    <property type="glycosylation" value="3 sites"/>
</dbReference>
<dbReference type="iPTMnet" id="P12108"/>
<dbReference type="PaxDb" id="9031-ENSGALP00000042507"/>
<dbReference type="VEuPathDB" id="HostDB:geneid_396524"/>
<dbReference type="InParanoid" id="P12108"/>
<dbReference type="OrthoDB" id="8956848at2759"/>
<dbReference type="PhylomeDB" id="P12108"/>
<dbReference type="Proteomes" id="UP000000539">
    <property type="component" value="Unassembled WGS sequence"/>
</dbReference>
<dbReference type="GO" id="GO:0005581">
    <property type="term" value="C:collagen trimer"/>
    <property type="evidence" value="ECO:0007669"/>
    <property type="project" value="UniProtKB-KW"/>
</dbReference>
<dbReference type="GO" id="GO:0062023">
    <property type="term" value="C:collagen-containing extracellular matrix"/>
    <property type="evidence" value="ECO:0000318"/>
    <property type="project" value="GO_Central"/>
</dbReference>
<dbReference type="GO" id="GO:0005615">
    <property type="term" value="C:extracellular space"/>
    <property type="evidence" value="ECO:0000318"/>
    <property type="project" value="GO_Central"/>
</dbReference>
<dbReference type="GO" id="GO:0030020">
    <property type="term" value="F:extracellular matrix structural constituent conferring tensile strength"/>
    <property type="evidence" value="ECO:0000318"/>
    <property type="project" value="GO_Central"/>
</dbReference>
<dbReference type="InterPro" id="IPR008160">
    <property type="entry name" value="Collagen"/>
</dbReference>
<dbReference type="InterPro" id="IPR050938">
    <property type="entry name" value="Collagen_Structural_Proteins"/>
</dbReference>
<dbReference type="PANTHER" id="PTHR37456:SF5">
    <property type="entry name" value="COLLAGEN TYPE XIII ALPHA 1 CHAIN"/>
    <property type="match status" value="1"/>
</dbReference>
<dbReference type="PANTHER" id="PTHR37456">
    <property type="entry name" value="SI:CH211-266K2.1"/>
    <property type="match status" value="1"/>
</dbReference>
<dbReference type="Pfam" id="PF01391">
    <property type="entry name" value="Collagen"/>
    <property type="match status" value="9"/>
</dbReference>